<organism>
    <name type="scientific">Saccharopolyspora erythraea (strain ATCC 11635 / DSM 40517 / JCM 4748 / NBRC 13426 / NCIMB 8594 / NRRL 2338)</name>
    <dbReference type="NCBI Taxonomy" id="405948"/>
    <lineage>
        <taxon>Bacteria</taxon>
        <taxon>Bacillati</taxon>
        <taxon>Actinomycetota</taxon>
        <taxon>Actinomycetes</taxon>
        <taxon>Pseudonocardiales</taxon>
        <taxon>Pseudonocardiaceae</taxon>
        <taxon>Saccharopolyspora</taxon>
    </lineage>
</organism>
<proteinExistence type="inferred from homology"/>
<gene>
    <name evidence="1" type="primary">kynA</name>
    <name type="ordered locus">SACE_4055</name>
</gene>
<sequence length="281" mass="32858">MVHGNSRPLEKDVVRDLRRELSYGQYLRLDRLLDAQHPVSEPEHHDELLFIIQHQTVELWLKLILHELRTAREHLARDELKPALKQLARVKHVQHTLTEQWSVLATLTPAEYVEFRGFLGRSSGFQSYQYRAIELILGNKNAEMLEVFAHDEFAHELLNGLLKEPSVYDEFVRLLHRRGHDVPAAFLQRDVSLPHTFTPELVPLFRGIYETAAENWDAYEACEELVDLEENFQFWRFRHLKTVERTIGLKHGTGGSSGVSFLRRALELTFFPELYAVRTEI</sequence>
<comment type="function">
    <text evidence="1">Heme-dependent dioxygenase that catalyzes the oxidative cleavage of the L-tryptophan (L-Trp) pyrrole ring and converts L-tryptophan to N-formyl-L-kynurenine. Catalyzes the oxidative cleavage of the indole moiety.</text>
</comment>
<comment type="catalytic activity">
    <reaction evidence="1">
        <text>L-tryptophan + O2 = N-formyl-L-kynurenine</text>
        <dbReference type="Rhea" id="RHEA:24536"/>
        <dbReference type="ChEBI" id="CHEBI:15379"/>
        <dbReference type="ChEBI" id="CHEBI:57912"/>
        <dbReference type="ChEBI" id="CHEBI:58629"/>
        <dbReference type="EC" id="1.13.11.11"/>
    </reaction>
</comment>
<comment type="cofactor">
    <cofactor evidence="1">
        <name>heme</name>
        <dbReference type="ChEBI" id="CHEBI:30413"/>
    </cofactor>
    <text evidence="1">Binds 1 heme group per subunit.</text>
</comment>
<comment type="pathway">
    <text evidence="1">Amino-acid degradation; L-tryptophan degradation via kynurenine pathway; L-kynurenine from L-tryptophan: step 1/2.</text>
</comment>
<comment type="subunit">
    <text evidence="1">Homotetramer.</text>
</comment>
<comment type="similarity">
    <text evidence="1">Belongs to the tryptophan 2,3-dioxygenase family.</text>
</comment>
<dbReference type="EC" id="1.13.11.11" evidence="1"/>
<dbReference type="EMBL" id="AM420293">
    <property type="protein sequence ID" value="CAM03326.1"/>
    <property type="molecule type" value="Genomic_DNA"/>
</dbReference>
<dbReference type="SMR" id="A4FH01"/>
<dbReference type="STRING" id="405948.SACE_4055"/>
<dbReference type="KEGG" id="sen:SACE_4055"/>
<dbReference type="eggNOG" id="COG3483">
    <property type="taxonomic scope" value="Bacteria"/>
</dbReference>
<dbReference type="HOGENOM" id="CLU_063240_0_0_11"/>
<dbReference type="OrthoDB" id="9776847at2"/>
<dbReference type="UniPathway" id="UPA00333">
    <property type="reaction ID" value="UER00453"/>
</dbReference>
<dbReference type="Proteomes" id="UP000006728">
    <property type="component" value="Chromosome"/>
</dbReference>
<dbReference type="GO" id="GO:0020037">
    <property type="term" value="F:heme binding"/>
    <property type="evidence" value="ECO:0000250"/>
    <property type="project" value="UniProtKB"/>
</dbReference>
<dbReference type="GO" id="GO:0046872">
    <property type="term" value="F:metal ion binding"/>
    <property type="evidence" value="ECO:0007669"/>
    <property type="project" value="UniProtKB-KW"/>
</dbReference>
<dbReference type="GO" id="GO:0004833">
    <property type="term" value="F:tryptophan 2,3-dioxygenase activity"/>
    <property type="evidence" value="ECO:0000250"/>
    <property type="project" value="UniProtKB"/>
</dbReference>
<dbReference type="GO" id="GO:0019442">
    <property type="term" value="P:L-tryptophan catabolic process to acetyl-CoA"/>
    <property type="evidence" value="ECO:0007669"/>
    <property type="project" value="TreeGrafter"/>
</dbReference>
<dbReference type="GO" id="GO:0019441">
    <property type="term" value="P:L-tryptophan catabolic process to kynurenine"/>
    <property type="evidence" value="ECO:0000250"/>
    <property type="project" value="UniProtKB"/>
</dbReference>
<dbReference type="FunFam" id="1.20.58.480:FF:000001">
    <property type="entry name" value="Tryptophan 2,3-dioxygenase"/>
    <property type="match status" value="1"/>
</dbReference>
<dbReference type="Gene3D" id="1.20.58.480">
    <property type="match status" value="1"/>
</dbReference>
<dbReference type="HAMAP" id="MF_01972">
    <property type="entry name" value="T23O"/>
    <property type="match status" value="1"/>
</dbReference>
<dbReference type="InterPro" id="IPR037217">
    <property type="entry name" value="Trp/Indoleamine_2_3_dOase-like"/>
</dbReference>
<dbReference type="InterPro" id="IPR004981">
    <property type="entry name" value="Trp_2_3_dOase"/>
</dbReference>
<dbReference type="PANTHER" id="PTHR10138">
    <property type="entry name" value="TRYPTOPHAN 2,3-DIOXYGENASE"/>
    <property type="match status" value="1"/>
</dbReference>
<dbReference type="PANTHER" id="PTHR10138:SF0">
    <property type="entry name" value="TRYPTOPHAN 2,3-DIOXYGENASE"/>
    <property type="match status" value="1"/>
</dbReference>
<dbReference type="Pfam" id="PF03301">
    <property type="entry name" value="Trp_dioxygenase"/>
    <property type="match status" value="2"/>
</dbReference>
<dbReference type="SUPFAM" id="SSF140959">
    <property type="entry name" value="Indolic compounds 2,3-dioxygenase-like"/>
    <property type="match status" value="1"/>
</dbReference>
<protein>
    <recommendedName>
        <fullName evidence="1">Tryptophan 2,3-dioxygenase</fullName>
        <shortName evidence="1">TDO</shortName>
        <ecNumber evidence="1">1.13.11.11</ecNumber>
    </recommendedName>
    <alternativeName>
        <fullName evidence="1">Tryptamin 2,3-dioxygenase</fullName>
    </alternativeName>
    <alternativeName>
        <fullName evidence="1">Tryptophan oxygenase</fullName>
        <shortName evidence="1">TO</shortName>
        <shortName evidence="1">TRPO</shortName>
    </alternativeName>
    <alternativeName>
        <fullName evidence="1">Tryptophan pyrrolase</fullName>
    </alternativeName>
    <alternativeName>
        <fullName evidence="1">Tryptophanase</fullName>
    </alternativeName>
</protein>
<accession>A4FH01</accession>
<evidence type="ECO:0000255" key="1">
    <source>
        <dbReference type="HAMAP-Rule" id="MF_01972"/>
    </source>
</evidence>
<feature type="chain" id="PRO_0000360132" description="Tryptophan 2,3-dioxygenase">
    <location>
        <begin position="1"/>
        <end position="281"/>
    </location>
</feature>
<feature type="binding site" evidence="1">
    <location>
        <begin position="50"/>
        <end position="54"/>
    </location>
    <ligand>
        <name>substrate</name>
    </ligand>
</feature>
<feature type="binding site" evidence="1">
    <location>
        <position position="112"/>
    </location>
    <ligand>
        <name>substrate</name>
    </ligand>
</feature>
<feature type="binding site" evidence="1">
    <location>
        <position position="116"/>
    </location>
    <ligand>
        <name>substrate</name>
    </ligand>
</feature>
<feature type="binding site" description="axial binding residue" evidence="1">
    <location>
        <position position="239"/>
    </location>
    <ligand>
        <name>heme</name>
        <dbReference type="ChEBI" id="CHEBI:30413"/>
    </ligand>
    <ligandPart>
        <name>Fe</name>
        <dbReference type="ChEBI" id="CHEBI:18248"/>
    </ligandPart>
</feature>
<feature type="binding site" evidence="1">
    <location>
        <position position="253"/>
    </location>
    <ligand>
        <name>substrate</name>
    </ligand>
</feature>
<keyword id="KW-0223">Dioxygenase</keyword>
<keyword id="KW-0349">Heme</keyword>
<keyword id="KW-0408">Iron</keyword>
<keyword id="KW-0479">Metal-binding</keyword>
<keyword id="KW-0560">Oxidoreductase</keyword>
<keyword id="KW-1185">Reference proteome</keyword>
<keyword id="KW-0823">Tryptophan catabolism</keyword>
<reference key="1">
    <citation type="journal article" date="2007" name="Nat. Biotechnol.">
        <title>Complete genome sequence of the erythromycin-producing bacterium Saccharopolyspora erythraea NRRL23338.</title>
        <authorList>
            <person name="Oliynyk M."/>
            <person name="Samborskyy M."/>
            <person name="Lester J.B."/>
            <person name="Mironenko T."/>
            <person name="Scott N."/>
            <person name="Dickens S."/>
            <person name="Haydock S.F."/>
            <person name="Leadlay P.F."/>
        </authorList>
    </citation>
    <scope>NUCLEOTIDE SEQUENCE [LARGE SCALE GENOMIC DNA]</scope>
    <source>
        <strain>ATCC 11635 / DSM 40517 / JCM 4748 / NBRC 13426 / NCIMB 8594 / NRRL 2338</strain>
    </source>
</reference>
<name>T23O_SACEN</name>